<comment type="function">
    <text evidence="1">PsaA and PsaB bind P700, the primary electron donor of photosystem I (PSI), as well as the electron acceptors A0, A1 and FX. PSI is a plastocyanin/cytochrome c6-ferredoxin oxidoreductase, converting photonic excitation into a charge separation, which transfers an electron from the donor P700 chlorophyll pair to the spectroscopically characterized acceptors A0, A1, FX, FA and FB in turn. Oxidized P700 is reduced on the lumenal side of the thylakoid membrane by plastocyanin or cytochrome c6.</text>
</comment>
<comment type="catalytic activity">
    <reaction evidence="1">
        <text>reduced [plastocyanin] + hnu + oxidized [2Fe-2S]-[ferredoxin] = oxidized [plastocyanin] + reduced [2Fe-2S]-[ferredoxin]</text>
        <dbReference type="Rhea" id="RHEA:30407"/>
        <dbReference type="Rhea" id="RHEA-COMP:10000"/>
        <dbReference type="Rhea" id="RHEA-COMP:10001"/>
        <dbReference type="Rhea" id="RHEA-COMP:10039"/>
        <dbReference type="Rhea" id="RHEA-COMP:10040"/>
        <dbReference type="ChEBI" id="CHEBI:29036"/>
        <dbReference type="ChEBI" id="CHEBI:30212"/>
        <dbReference type="ChEBI" id="CHEBI:33737"/>
        <dbReference type="ChEBI" id="CHEBI:33738"/>
        <dbReference type="ChEBI" id="CHEBI:49552"/>
        <dbReference type="EC" id="1.97.1.12"/>
    </reaction>
</comment>
<comment type="cofactor">
    <text evidence="1">PSI electron transfer chain: 5 chlorophyll a, 1 chlorophyll a', 2 phylloquinones and 3 4Fe-4S clusters. PSI core antenna: 90 chlorophyll a, 22 carotenoids, 3 phospholipids and 1 galactolipid. P700 is a chlorophyll a/chlorophyll a' dimer, A0 is one or more chlorophyll a, A1 is one or both phylloquinones and FX is a shared 4Fe-4S iron-sulfur center.</text>
</comment>
<comment type="subunit">
    <text evidence="1">The PsaA/B heterodimer binds the P700 chlorophyll special pair and subsequent electron acceptors. PSI consists of a core antenna complex that captures photons, and an electron transfer chain that converts photonic excitation into a charge separation. The cyanobacterial PSI reaction center is composed of one copy each of PsaA,B,C,D,E,F,I,J,K,L,M and X, and forms trimeric complexes.</text>
</comment>
<comment type="subcellular location">
    <subcellularLocation>
        <location evidence="1">Cellular thylakoid membrane</location>
        <topology evidence="1">Multi-pass membrane protein</topology>
    </subcellularLocation>
</comment>
<comment type="similarity">
    <text evidence="1">Belongs to the PsaA/PsaB family.</text>
</comment>
<evidence type="ECO:0000255" key="1">
    <source>
        <dbReference type="HAMAP-Rule" id="MF_00458"/>
    </source>
</evidence>
<name>PSAA_SYNJB</name>
<accession>Q2JQ89</accession>
<reference key="1">
    <citation type="journal article" date="2007" name="ISME J.">
        <title>Population level functional diversity in a microbial community revealed by comparative genomic and metagenomic analyses.</title>
        <authorList>
            <person name="Bhaya D."/>
            <person name="Grossman A.R."/>
            <person name="Steunou A.-S."/>
            <person name="Khuri N."/>
            <person name="Cohan F.M."/>
            <person name="Hamamura N."/>
            <person name="Melendrez M.C."/>
            <person name="Bateson M.M."/>
            <person name="Ward D.M."/>
            <person name="Heidelberg J.F."/>
        </authorList>
    </citation>
    <scope>NUCLEOTIDE SEQUENCE [LARGE SCALE GENOMIC DNA]</scope>
    <source>
        <strain>JA-2-3B'a(2-13)</strain>
    </source>
</reference>
<organism>
    <name type="scientific">Synechococcus sp. (strain JA-2-3B'a(2-13))</name>
    <name type="common">Cyanobacteria bacterium Yellowstone B-Prime</name>
    <dbReference type="NCBI Taxonomy" id="321332"/>
    <lineage>
        <taxon>Bacteria</taxon>
        <taxon>Bacillati</taxon>
        <taxon>Cyanobacteriota</taxon>
        <taxon>Cyanophyceae</taxon>
        <taxon>Synechococcales</taxon>
        <taxon>Synechococcaceae</taxon>
        <taxon>Synechococcus</taxon>
    </lineage>
</organism>
<protein>
    <recommendedName>
        <fullName evidence="1">Photosystem I P700 chlorophyll a apoprotein A1</fullName>
        <ecNumber evidence="1">1.97.1.12</ecNumber>
    </recommendedName>
    <alternativeName>
        <fullName evidence="1">PsaA</fullName>
    </alternativeName>
</protein>
<dbReference type="EC" id="1.97.1.12" evidence="1"/>
<dbReference type="EMBL" id="CP000240">
    <property type="protein sequence ID" value="ABD01023.1"/>
    <property type="molecule type" value="Genomic_DNA"/>
</dbReference>
<dbReference type="RefSeq" id="WP_011431694.1">
    <property type="nucleotide sequence ID" value="NC_007776.1"/>
</dbReference>
<dbReference type="SMR" id="Q2JQ89"/>
<dbReference type="STRING" id="321332.CYB_0022"/>
<dbReference type="KEGG" id="cyb:CYB_0022"/>
<dbReference type="eggNOG" id="COG2885">
    <property type="taxonomic scope" value="Bacteria"/>
</dbReference>
<dbReference type="HOGENOM" id="CLU_016126_1_0_3"/>
<dbReference type="OrthoDB" id="499313at2"/>
<dbReference type="Proteomes" id="UP000001938">
    <property type="component" value="Chromosome"/>
</dbReference>
<dbReference type="GO" id="GO:0009522">
    <property type="term" value="C:photosystem I"/>
    <property type="evidence" value="ECO:0007669"/>
    <property type="project" value="UniProtKB-KW"/>
</dbReference>
<dbReference type="GO" id="GO:0031676">
    <property type="term" value="C:plasma membrane-derived thylakoid membrane"/>
    <property type="evidence" value="ECO:0007669"/>
    <property type="project" value="UniProtKB-SubCell"/>
</dbReference>
<dbReference type="GO" id="GO:0051539">
    <property type="term" value="F:4 iron, 4 sulfur cluster binding"/>
    <property type="evidence" value="ECO:0007669"/>
    <property type="project" value="UniProtKB-KW"/>
</dbReference>
<dbReference type="GO" id="GO:0016168">
    <property type="term" value="F:chlorophyll binding"/>
    <property type="evidence" value="ECO:0007669"/>
    <property type="project" value="UniProtKB-KW"/>
</dbReference>
<dbReference type="GO" id="GO:0009055">
    <property type="term" value="F:electron transfer activity"/>
    <property type="evidence" value="ECO:0007669"/>
    <property type="project" value="UniProtKB-UniRule"/>
</dbReference>
<dbReference type="GO" id="GO:0000287">
    <property type="term" value="F:magnesium ion binding"/>
    <property type="evidence" value="ECO:0007669"/>
    <property type="project" value="UniProtKB-UniRule"/>
</dbReference>
<dbReference type="GO" id="GO:0016491">
    <property type="term" value="F:oxidoreductase activity"/>
    <property type="evidence" value="ECO:0007669"/>
    <property type="project" value="UniProtKB-KW"/>
</dbReference>
<dbReference type="GO" id="GO:0015979">
    <property type="term" value="P:photosynthesis"/>
    <property type="evidence" value="ECO:0007669"/>
    <property type="project" value="UniProtKB-UniRule"/>
</dbReference>
<dbReference type="Gene3D" id="1.20.1130.10">
    <property type="entry name" value="Photosystem I PsaA/PsaB"/>
    <property type="match status" value="1"/>
</dbReference>
<dbReference type="HAMAP" id="MF_00458">
    <property type="entry name" value="PSI_PsaA"/>
    <property type="match status" value="1"/>
</dbReference>
<dbReference type="InterPro" id="IPR006243">
    <property type="entry name" value="PSI_PsaA"/>
</dbReference>
<dbReference type="InterPro" id="IPR001280">
    <property type="entry name" value="PSI_PsaA/B"/>
</dbReference>
<dbReference type="InterPro" id="IPR020586">
    <property type="entry name" value="PSI_PsaA/B_CS"/>
</dbReference>
<dbReference type="InterPro" id="IPR036408">
    <property type="entry name" value="PSI_PsaA/B_sf"/>
</dbReference>
<dbReference type="NCBIfam" id="TIGR01335">
    <property type="entry name" value="psaA"/>
    <property type="match status" value="1"/>
</dbReference>
<dbReference type="PANTHER" id="PTHR30128">
    <property type="entry name" value="OUTER MEMBRANE PROTEIN, OMPA-RELATED"/>
    <property type="match status" value="1"/>
</dbReference>
<dbReference type="PANTHER" id="PTHR30128:SF19">
    <property type="entry name" value="PHOTOSYSTEM I P700 CHLOROPHYLL A APOPROTEIN A1-RELATED"/>
    <property type="match status" value="1"/>
</dbReference>
<dbReference type="Pfam" id="PF00223">
    <property type="entry name" value="PsaA_PsaB"/>
    <property type="match status" value="1"/>
</dbReference>
<dbReference type="PIRSF" id="PIRSF002905">
    <property type="entry name" value="PSI_A"/>
    <property type="match status" value="1"/>
</dbReference>
<dbReference type="PRINTS" id="PR00257">
    <property type="entry name" value="PHOTSYSPSAAB"/>
</dbReference>
<dbReference type="SUPFAM" id="SSF81558">
    <property type="entry name" value="Photosystem I subunits PsaA/PsaB"/>
    <property type="match status" value="1"/>
</dbReference>
<dbReference type="PROSITE" id="PS00419">
    <property type="entry name" value="PHOTOSYSTEM_I_PSAAB"/>
    <property type="match status" value="1"/>
</dbReference>
<gene>
    <name evidence="1" type="primary">psaA</name>
    <name type="ordered locus">CYB_0022</name>
</gene>
<proteinExistence type="inferred from homology"/>
<keyword id="KW-0004">4Fe-4S</keyword>
<keyword id="KW-0148">Chlorophyll</keyword>
<keyword id="KW-0157">Chromophore</keyword>
<keyword id="KW-0249">Electron transport</keyword>
<keyword id="KW-0408">Iron</keyword>
<keyword id="KW-0411">Iron-sulfur</keyword>
<keyword id="KW-0460">Magnesium</keyword>
<keyword id="KW-0472">Membrane</keyword>
<keyword id="KW-0479">Metal-binding</keyword>
<keyword id="KW-0560">Oxidoreductase</keyword>
<keyword id="KW-0602">Photosynthesis</keyword>
<keyword id="KW-0603">Photosystem I</keyword>
<keyword id="KW-1185">Reference proteome</keyword>
<keyword id="KW-0793">Thylakoid</keyword>
<keyword id="KW-0812">Transmembrane</keyword>
<keyword id="KW-1133">Transmembrane helix</keyword>
<keyword id="KW-0813">Transport</keyword>
<sequence>MTTTPKEREPKVKVSVDVDPVPTSFEKWAKPGHFDRSLSRGPKTTTWIWNLHALAHDFDSHTSDLEDVSRKIFSAHFGHLAVVFVWLSGMYYHGAQFSNYSAWLADPINIKPSAQVVWPIFGQEILNGDVGGGFEGIRITSGLFHLWRAAGITNEFQLLCTAIGGLVMAGLCLFAGWFHYHKRAPKLEWFQNVESMLNHHLAGLLGLGSLAWAGHQIHVAIPINKMLDAGVPADQVPLPHEFILKPALMKEMFPSVDWGIFSGVVPFFTLDWGKYAEFLTFKGGLDPQNGALWLTDQAHHHLAIAVLFIVAGHMYRTNWGIGHSIKEILEAHKGPFTGEGHKGLYEVLTTSWHAQLAINLAMVGSLSIIVAQHMYAMNPYPYMGIDYATQISLFTHHMWIGGFFVVGGAAHGAIYMVRDYDPAVNRNNVLDRVLRHRDAIISHLNWVCLFLGFHAFGFYVHNDTMQALGRPQDMFSDTGIQLQPIFAQWIQSLHTSAIASTAPYVGASVSPIFGGDVVAVGGKVSMMPMVLGTADFMVHHIHAMTIHITVLILLKGVLFARSSRLIPDKGKLGFRFPCDGPGRGGTCQVSGWDHVFLGLFWMYNCISIVIFHFSWKMQSDIWGTVNADGTIEHITGGNFAASAININGWLRDFLWAQSVQVINSYGSALSAYGLLFLGAHFVWAFSLMFLFSGRGYWQELIESIVWAHNKLKVAPAIQPRALSIIQGRAVGVAHYLLGGIVTTWAFFLARFGALG</sequence>
<feature type="chain" id="PRO_0000294209" description="Photosystem I P700 chlorophyll a apoprotein A1">
    <location>
        <begin position="1"/>
        <end position="755"/>
    </location>
</feature>
<feature type="transmembrane region" description="Helical; Name=I" evidence="1">
    <location>
        <begin position="72"/>
        <end position="95"/>
    </location>
</feature>
<feature type="transmembrane region" description="Helical; Name=II" evidence="1">
    <location>
        <begin position="158"/>
        <end position="181"/>
    </location>
</feature>
<feature type="transmembrane region" description="Helical; Name=III" evidence="1">
    <location>
        <begin position="197"/>
        <end position="221"/>
    </location>
</feature>
<feature type="transmembrane region" description="Helical; Name=IV" evidence="1">
    <location>
        <begin position="297"/>
        <end position="315"/>
    </location>
</feature>
<feature type="transmembrane region" description="Helical; Name=V" evidence="1">
    <location>
        <begin position="352"/>
        <end position="375"/>
    </location>
</feature>
<feature type="transmembrane region" description="Helical; Name=VI" evidence="1">
    <location>
        <begin position="391"/>
        <end position="417"/>
    </location>
</feature>
<feature type="transmembrane region" description="Helical; Name=VII" evidence="1">
    <location>
        <begin position="439"/>
        <end position="461"/>
    </location>
</feature>
<feature type="transmembrane region" description="Helical; Name=VIII" evidence="1">
    <location>
        <begin position="536"/>
        <end position="554"/>
    </location>
</feature>
<feature type="transmembrane region" description="Helical; Name=IX" evidence="1">
    <location>
        <begin position="594"/>
        <end position="615"/>
    </location>
</feature>
<feature type="transmembrane region" description="Helical; Name=X" evidence="1">
    <location>
        <begin position="669"/>
        <end position="691"/>
    </location>
</feature>
<feature type="transmembrane region" description="Helical; Name=XI" evidence="1">
    <location>
        <begin position="729"/>
        <end position="749"/>
    </location>
</feature>
<feature type="binding site" evidence="1">
    <location>
        <position position="578"/>
    </location>
    <ligand>
        <name>[4Fe-4S] cluster</name>
        <dbReference type="ChEBI" id="CHEBI:49883"/>
        <note>ligand shared between dimeric partners</note>
    </ligand>
</feature>
<feature type="binding site" evidence="1">
    <location>
        <position position="587"/>
    </location>
    <ligand>
        <name>[4Fe-4S] cluster</name>
        <dbReference type="ChEBI" id="CHEBI:49883"/>
        <note>ligand shared between dimeric partners</note>
    </ligand>
</feature>
<feature type="binding site" description="axial binding residue" evidence="1">
    <location>
        <position position="680"/>
    </location>
    <ligand>
        <name>chlorophyll a'</name>
        <dbReference type="ChEBI" id="CHEBI:189419"/>
        <label>A1</label>
    </ligand>
    <ligandPart>
        <name>Mg</name>
        <dbReference type="ChEBI" id="CHEBI:25107"/>
    </ligandPart>
</feature>
<feature type="binding site" description="axial binding residue" evidence="1">
    <location>
        <position position="688"/>
    </location>
    <ligand>
        <name>chlorophyll a</name>
        <dbReference type="ChEBI" id="CHEBI:58416"/>
        <label>A3</label>
    </ligand>
    <ligandPart>
        <name>Mg</name>
        <dbReference type="ChEBI" id="CHEBI:25107"/>
    </ligandPart>
</feature>
<feature type="binding site" evidence="1">
    <location>
        <position position="696"/>
    </location>
    <ligand>
        <name>chlorophyll a</name>
        <dbReference type="ChEBI" id="CHEBI:58416"/>
        <label>A3</label>
    </ligand>
</feature>
<feature type="binding site" evidence="1">
    <location>
        <position position="697"/>
    </location>
    <ligand>
        <name>phylloquinone</name>
        <dbReference type="ChEBI" id="CHEBI:18067"/>
        <label>A</label>
    </ligand>
</feature>